<comment type="catalytic activity">
    <reaction evidence="1">
        <text>sn-glycerol 3-phosphate + an acyl-CoA = a 1-acyl-sn-glycero-3-phosphate + CoA</text>
        <dbReference type="Rhea" id="RHEA:15325"/>
        <dbReference type="ChEBI" id="CHEBI:57287"/>
        <dbReference type="ChEBI" id="CHEBI:57597"/>
        <dbReference type="ChEBI" id="CHEBI:57970"/>
        <dbReference type="ChEBI" id="CHEBI:58342"/>
        <dbReference type="EC" id="2.3.1.15"/>
    </reaction>
</comment>
<comment type="pathway">
    <text evidence="1">Phospholipid metabolism; CDP-diacylglycerol biosynthesis; CDP-diacylglycerol from sn-glycerol 3-phosphate: step 1/3.</text>
</comment>
<comment type="subcellular location">
    <subcellularLocation>
        <location evidence="1">Cell inner membrane</location>
        <topology evidence="1">Peripheral membrane protein</topology>
        <orientation evidence="1">Cytoplasmic side</orientation>
    </subcellularLocation>
</comment>
<comment type="domain">
    <text evidence="1">The HXXXXD motif is essential for acyltransferase activity and may constitute the binding site for the phosphate moiety of the glycerol-3-phosphate.</text>
</comment>
<comment type="similarity">
    <text evidence="1">Belongs to the GPAT/DAPAT family.</text>
</comment>
<evidence type="ECO:0000255" key="1">
    <source>
        <dbReference type="HAMAP-Rule" id="MF_00393"/>
    </source>
</evidence>
<evidence type="ECO:0000256" key="2">
    <source>
        <dbReference type="SAM" id="MobiDB-lite"/>
    </source>
</evidence>
<gene>
    <name evidence="1" type="primary">plsB</name>
    <name type="ordered locus">YPK_3862</name>
</gene>
<sequence>MSGWRKIYYKLLNLPLKLLVKSKVIPADPVSELGLDPSRPILYVLPYNSKADLLTLRAQCLAQDLPDPLIPLEIDGVQLPSHVFIENGPRVFRYYVPKQESVKLFHDYLDLHRNNPALDIQMLPVSVMFGRSPGREGHGTPHLRVLNGVQKFFAVLWLGRDSFVRFSTTVSLRRMASEHGTDKTIAHKLARVARMHFSRQRLAAVGPSLPARQDLFKKLLASKAIEKAVADEARSKKISHEKAQQNAITLMEEIAANFSYEAVRLSDRVLSWTWNRLYQGINVHNAERVRQLAQDGHEIVYVPCHRSHMDYLLLSYVLYHQGLVPPHIAAGINLNFWPAGPIFRRLGAFFIRRTFKGNKLYSTVFREYLGELFTRGYSVEYFVEGGRSRTGRLLEPKTGTLSMTIQAMLRGGTRPITLVPIYIGYEHVMEVGTYAKELRGAIKEKENLLQMLRGLRKLRNLGQGYVNFGEPLPLTTYLNTHVPQWRDAIDPIEAQRPSWLTPAVNDLANQIMVRINNAAAANAMNLCSTALLASRQRSLTREQLLEQLDCYLQLMRNAPYAKDTTVPDKTPEELLNHALNMNKFEVEKDTIGDIIILPREQAVLMTYYRNNIQHLLILPSLIASMVMYHRRITRTELLHKISMIYPMLKAELFLHYSKEQLPETLDTLIDELARQQLICDKGSELVLNPARIRPLQLLAAGVRETLQRYAITLSLLSATPSINRGALEKESRIMAQRLSVLHGINAPEFFDKAVFSTLVATLREEGYISDSGDAIQEHTLEVYNMLSALMTPEVKLTIESVSMPAETSNQPEAPETPETPEPEGKTES</sequence>
<accession>B1JNE5</accession>
<reference key="1">
    <citation type="submission" date="2008-02" db="EMBL/GenBank/DDBJ databases">
        <title>Complete sequence of Yersinia pseudotuberculosis YPIII.</title>
        <authorList>
            <consortium name="US DOE Joint Genome Institute"/>
            <person name="Copeland A."/>
            <person name="Lucas S."/>
            <person name="Lapidus A."/>
            <person name="Glavina del Rio T."/>
            <person name="Dalin E."/>
            <person name="Tice H."/>
            <person name="Bruce D."/>
            <person name="Goodwin L."/>
            <person name="Pitluck S."/>
            <person name="Munk A.C."/>
            <person name="Brettin T."/>
            <person name="Detter J.C."/>
            <person name="Han C."/>
            <person name="Tapia R."/>
            <person name="Schmutz J."/>
            <person name="Larimer F."/>
            <person name="Land M."/>
            <person name="Hauser L."/>
            <person name="Challacombe J.F."/>
            <person name="Green L."/>
            <person name="Lindler L.E."/>
            <person name="Nikolich M.P."/>
            <person name="Richardson P."/>
        </authorList>
    </citation>
    <scope>NUCLEOTIDE SEQUENCE [LARGE SCALE GENOMIC DNA]</scope>
    <source>
        <strain>YPIII</strain>
    </source>
</reference>
<feature type="chain" id="PRO_1000123104" description="Glycerol-3-phosphate acyltransferase">
    <location>
        <begin position="1"/>
        <end position="828"/>
    </location>
</feature>
<feature type="region of interest" description="Disordered" evidence="2">
    <location>
        <begin position="802"/>
        <end position="828"/>
    </location>
</feature>
<feature type="short sequence motif" description="HXXXXD motif">
    <location>
        <begin position="304"/>
        <end position="309"/>
    </location>
</feature>
<keyword id="KW-0012">Acyltransferase</keyword>
<keyword id="KW-0997">Cell inner membrane</keyword>
<keyword id="KW-1003">Cell membrane</keyword>
<keyword id="KW-0444">Lipid biosynthesis</keyword>
<keyword id="KW-0443">Lipid metabolism</keyword>
<keyword id="KW-0472">Membrane</keyword>
<keyword id="KW-0594">Phospholipid biosynthesis</keyword>
<keyword id="KW-1208">Phospholipid metabolism</keyword>
<keyword id="KW-0808">Transferase</keyword>
<proteinExistence type="inferred from homology"/>
<dbReference type="EC" id="2.3.1.15" evidence="1"/>
<dbReference type="EMBL" id="CP000950">
    <property type="protein sequence ID" value="ACA70127.1"/>
    <property type="molecule type" value="Genomic_DNA"/>
</dbReference>
<dbReference type="RefSeq" id="WP_012304690.1">
    <property type="nucleotide sequence ID" value="NZ_CP009792.1"/>
</dbReference>
<dbReference type="SMR" id="B1JNE5"/>
<dbReference type="GeneID" id="49787638"/>
<dbReference type="KEGG" id="ypy:YPK_3862"/>
<dbReference type="PATRIC" id="fig|502800.11.peg.209"/>
<dbReference type="UniPathway" id="UPA00557">
    <property type="reaction ID" value="UER00612"/>
</dbReference>
<dbReference type="GO" id="GO:0005886">
    <property type="term" value="C:plasma membrane"/>
    <property type="evidence" value="ECO:0007669"/>
    <property type="project" value="UniProtKB-SubCell"/>
</dbReference>
<dbReference type="GO" id="GO:0004366">
    <property type="term" value="F:glycerol-3-phosphate O-acyltransferase activity"/>
    <property type="evidence" value="ECO:0007669"/>
    <property type="project" value="UniProtKB-UniRule"/>
</dbReference>
<dbReference type="GO" id="GO:0016024">
    <property type="term" value="P:CDP-diacylglycerol biosynthetic process"/>
    <property type="evidence" value="ECO:0007669"/>
    <property type="project" value="UniProtKB-UniRule"/>
</dbReference>
<dbReference type="GO" id="GO:0006631">
    <property type="term" value="P:fatty acid metabolic process"/>
    <property type="evidence" value="ECO:0007669"/>
    <property type="project" value="TreeGrafter"/>
</dbReference>
<dbReference type="CDD" id="cd07993">
    <property type="entry name" value="LPLAT_DHAPAT-like"/>
    <property type="match status" value="1"/>
</dbReference>
<dbReference type="HAMAP" id="MF_00393">
    <property type="entry name" value="Glyc3P_acyltrans"/>
    <property type="match status" value="1"/>
</dbReference>
<dbReference type="InterPro" id="IPR022284">
    <property type="entry name" value="GPAT/DHAPAT"/>
</dbReference>
<dbReference type="InterPro" id="IPR045520">
    <property type="entry name" value="GPAT/DHAPAT_C"/>
</dbReference>
<dbReference type="InterPro" id="IPR041728">
    <property type="entry name" value="GPAT/DHAPAT_LPLAT"/>
</dbReference>
<dbReference type="InterPro" id="IPR028354">
    <property type="entry name" value="GPAT_PlsB"/>
</dbReference>
<dbReference type="InterPro" id="IPR002123">
    <property type="entry name" value="Plipid/glycerol_acylTrfase"/>
</dbReference>
<dbReference type="NCBIfam" id="TIGR03703">
    <property type="entry name" value="plsB"/>
    <property type="match status" value="1"/>
</dbReference>
<dbReference type="NCBIfam" id="NF003441">
    <property type="entry name" value="PRK04974.1"/>
    <property type="match status" value="1"/>
</dbReference>
<dbReference type="PANTHER" id="PTHR12563:SF17">
    <property type="entry name" value="DIHYDROXYACETONE PHOSPHATE ACYLTRANSFERASE"/>
    <property type="match status" value="1"/>
</dbReference>
<dbReference type="PANTHER" id="PTHR12563">
    <property type="entry name" value="GLYCEROL-3-PHOSPHATE ACYLTRANSFERASE"/>
    <property type="match status" value="1"/>
</dbReference>
<dbReference type="Pfam" id="PF01553">
    <property type="entry name" value="Acyltransferase"/>
    <property type="match status" value="1"/>
</dbReference>
<dbReference type="Pfam" id="PF19277">
    <property type="entry name" value="GPAT_C"/>
    <property type="match status" value="1"/>
</dbReference>
<dbReference type="PIRSF" id="PIRSF500064">
    <property type="entry name" value="GPAT"/>
    <property type="match status" value="1"/>
</dbReference>
<dbReference type="PIRSF" id="PIRSF000437">
    <property type="entry name" value="GPAT_DHAPAT"/>
    <property type="match status" value="1"/>
</dbReference>
<dbReference type="SMART" id="SM00563">
    <property type="entry name" value="PlsC"/>
    <property type="match status" value="1"/>
</dbReference>
<dbReference type="SUPFAM" id="SSF69593">
    <property type="entry name" value="Glycerol-3-phosphate (1)-acyltransferase"/>
    <property type="match status" value="1"/>
</dbReference>
<name>PLSB_YERPY</name>
<organism>
    <name type="scientific">Yersinia pseudotuberculosis serotype O:3 (strain YPIII)</name>
    <dbReference type="NCBI Taxonomy" id="502800"/>
    <lineage>
        <taxon>Bacteria</taxon>
        <taxon>Pseudomonadati</taxon>
        <taxon>Pseudomonadota</taxon>
        <taxon>Gammaproteobacteria</taxon>
        <taxon>Enterobacterales</taxon>
        <taxon>Yersiniaceae</taxon>
        <taxon>Yersinia</taxon>
    </lineage>
</organism>
<protein>
    <recommendedName>
        <fullName evidence="1">Glycerol-3-phosphate acyltransferase</fullName>
        <shortName evidence="1">GPAT</shortName>
        <ecNumber evidence="1">2.3.1.15</ecNumber>
    </recommendedName>
</protein>